<feature type="chain" id="PRO_0000329474" description="Argininosuccinate synthase">
    <location>
        <begin position="1"/>
        <end position="425"/>
    </location>
</feature>
<feature type="binding site" evidence="1">
    <location>
        <begin position="7"/>
        <end position="15"/>
    </location>
    <ligand>
        <name>ATP</name>
        <dbReference type="ChEBI" id="CHEBI:30616"/>
    </ligand>
</feature>
<feature type="binding site" evidence="1">
    <location>
        <position position="33"/>
    </location>
    <ligand>
        <name>ATP</name>
        <dbReference type="ChEBI" id="CHEBI:30616"/>
    </ligand>
</feature>
<feature type="binding site" evidence="1">
    <location>
        <position position="84"/>
    </location>
    <ligand>
        <name>L-citrulline</name>
        <dbReference type="ChEBI" id="CHEBI:57743"/>
    </ligand>
</feature>
<feature type="binding site" evidence="1">
    <location>
        <position position="114"/>
    </location>
    <ligand>
        <name>ATP</name>
        <dbReference type="ChEBI" id="CHEBI:30616"/>
    </ligand>
</feature>
<feature type="binding site" evidence="1">
    <location>
        <position position="116"/>
    </location>
    <ligand>
        <name>L-aspartate</name>
        <dbReference type="ChEBI" id="CHEBI:29991"/>
    </ligand>
</feature>
<feature type="binding site" evidence="1">
    <location>
        <position position="120"/>
    </location>
    <ligand>
        <name>L-aspartate</name>
        <dbReference type="ChEBI" id="CHEBI:29991"/>
    </ligand>
</feature>
<feature type="binding site" evidence="1">
    <location>
        <position position="120"/>
    </location>
    <ligand>
        <name>L-citrulline</name>
        <dbReference type="ChEBI" id="CHEBI:57743"/>
    </ligand>
</feature>
<feature type="binding site" evidence="1">
    <location>
        <position position="121"/>
    </location>
    <ligand>
        <name>L-aspartate</name>
        <dbReference type="ChEBI" id="CHEBI:29991"/>
    </ligand>
</feature>
<feature type="binding site" evidence="1">
    <location>
        <position position="124"/>
    </location>
    <ligand>
        <name>L-citrulline</name>
        <dbReference type="ChEBI" id="CHEBI:57743"/>
    </ligand>
</feature>
<feature type="binding site" evidence="1">
    <location>
        <position position="177"/>
    </location>
    <ligand>
        <name>L-citrulline</name>
        <dbReference type="ChEBI" id="CHEBI:57743"/>
    </ligand>
</feature>
<feature type="binding site" evidence="1">
    <location>
        <position position="186"/>
    </location>
    <ligand>
        <name>L-citrulline</name>
        <dbReference type="ChEBI" id="CHEBI:57743"/>
    </ligand>
</feature>
<feature type="binding site" evidence="1">
    <location>
        <position position="267"/>
    </location>
    <ligand>
        <name>L-citrulline</name>
        <dbReference type="ChEBI" id="CHEBI:57743"/>
    </ligand>
</feature>
<feature type="binding site" evidence="1">
    <location>
        <position position="279"/>
    </location>
    <ligand>
        <name>L-citrulline</name>
        <dbReference type="ChEBI" id="CHEBI:57743"/>
    </ligand>
</feature>
<name>ASSY_PSELT</name>
<evidence type="ECO:0000255" key="1">
    <source>
        <dbReference type="HAMAP-Rule" id="MF_00005"/>
    </source>
</evidence>
<comment type="catalytic activity">
    <reaction evidence="1">
        <text>L-citrulline + L-aspartate + ATP = 2-(N(omega)-L-arginino)succinate + AMP + diphosphate + H(+)</text>
        <dbReference type="Rhea" id="RHEA:10932"/>
        <dbReference type="ChEBI" id="CHEBI:15378"/>
        <dbReference type="ChEBI" id="CHEBI:29991"/>
        <dbReference type="ChEBI" id="CHEBI:30616"/>
        <dbReference type="ChEBI" id="CHEBI:33019"/>
        <dbReference type="ChEBI" id="CHEBI:57472"/>
        <dbReference type="ChEBI" id="CHEBI:57743"/>
        <dbReference type="ChEBI" id="CHEBI:456215"/>
        <dbReference type="EC" id="6.3.4.5"/>
    </reaction>
</comment>
<comment type="pathway">
    <text evidence="1">Amino-acid biosynthesis; L-arginine biosynthesis; L-arginine from L-ornithine and carbamoyl phosphate: step 2/3.</text>
</comment>
<comment type="subunit">
    <text evidence="1">Homotetramer.</text>
</comment>
<comment type="subcellular location">
    <subcellularLocation>
        <location evidence="1">Cytoplasm</location>
    </subcellularLocation>
</comment>
<comment type="similarity">
    <text evidence="1">Belongs to the argininosuccinate synthase family. Type 1 subfamily.</text>
</comment>
<keyword id="KW-0028">Amino-acid biosynthesis</keyword>
<keyword id="KW-0055">Arginine biosynthesis</keyword>
<keyword id="KW-0067">ATP-binding</keyword>
<keyword id="KW-0963">Cytoplasm</keyword>
<keyword id="KW-0436">Ligase</keyword>
<keyword id="KW-0547">Nucleotide-binding</keyword>
<keyword id="KW-1185">Reference proteome</keyword>
<dbReference type="EC" id="6.3.4.5" evidence="1"/>
<dbReference type="EMBL" id="CP000812">
    <property type="protein sequence ID" value="ABV32930.1"/>
    <property type="molecule type" value="Genomic_DNA"/>
</dbReference>
<dbReference type="RefSeq" id="WP_012002411.1">
    <property type="nucleotide sequence ID" value="NZ_BSDV01000001.1"/>
</dbReference>
<dbReference type="SMR" id="A8F446"/>
<dbReference type="STRING" id="416591.Tlet_0363"/>
<dbReference type="KEGG" id="tle:Tlet_0363"/>
<dbReference type="eggNOG" id="COG0137">
    <property type="taxonomic scope" value="Bacteria"/>
</dbReference>
<dbReference type="HOGENOM" id="CLU_032784_4_2_0"/>
<dbReference type="OrthoDB" id="9801641at2"/>
<dbReference type="UniPathway" id="UPA00068">
    <property type="reaction ID" value="UER00113"/>
</dbReference>
<dbReference type="Proteomes" id="UP000002016">
    <property type="component" value="Chromosome"/>
</dbReference>
<dbReference type="GO" id="GO:0005737">
    <property type="term" value="C:cytoplasm"/>
    <property type="evidence" value="ECO:0007669"/>
    <property type="project" value="UniProtKB-SubCell"/>
</dbReference>
<dbReference type="GO" id="GO:0004055">
    <property type="term" value="F:argininosuccinate synthase activity"/>
    <property type="evidence" value="ECO:0007669"/>
    <property type="project" value="UniProtKB-UniRule"/>
</dbReference>
<dbReference type="GO" id="GO:0005524">
    <property type="term" value="F:ATP binding"/>
    <property type="evidence" value="ECO:0007669"/>
    <property type="project" value="UniProtKB-UniRule"/>
</dbReference>
<dbReference type="GO" id="GO:0000053">
    <property type="term" value="P:argininosuccinate metabolic process"/>
    <property type="evidence" value="ECO:0007669"/>
    <property type="project" value="TreeGrafter"/>
</dbReference>
<dbReference type="GO" id="GO:0006526">
    <property type="term" value="P:L-arginine biosynthetic process"/>
    <property type="evidence" value="ECO:0007669"/>
    <property type="project" value="UniProtKB-UniRule"/>
</dbReference>
<dbReference type="GO" id="GO:0000050">
    <property type="term" value="P:urea cycle"/>
    <property type="evidence" value="ECO:0007669"/>
    <property type="project" value="TreeGrafter"/>
</dbReference>
<dbReference type="CDD" id="cd01999">
    <property type="entry name" value="ASS"/>
    <property type="match status" value="1"/>
</dbReference>
<dbReference type="FunFam" id="3.40.50.620:FF:000019">
    <property type="entry name" value="Argininosuccinate synthase"/>
    <property type="match status" value="1"/>
</dbReference>
<dbReference type="FunFam" id="3.90.1260.10:FF:000003">
    <property type="entry name" value="Argininosuccinate synthase"/>
    <property type="match status" value="1"/>
</dbReference>
<dbReference type="Gene3D" id="3.90.1260.10">
    <property type="entry name" value="Argininosuccinate synthetase, chain A, domain 2"/>
    <property type="match status" value="1"/>
</dbReference>
<dbReference type="Gene3D" id="3.40.50.620">
    <property type="entry name" value="HUPs"/>
    <property type="match status" value="1"/>
</dbReference>
<dbReference type="HAMAP" id="MF_00005">
    <property type="entry name" value="Arg_succ_synth_type1"/>
    <property type="match status" value="1"/>
</dbReference>
<dbReference type="InterPro" id="IPR048268">
    <property type="entry name" value="Arginosuc_syn_C"/>
</dbReference>
<dbReference type="InterPro" id="IPR048267">
    <property type="entry name" value="Arginosuc_syn_N"/>
</dbReference>
<dbReference type="InterPro" id="IPR001518">
    <property type="entry name" value="Arginosuc_synth"/>
</dbReference>
<dbReference type="InterPro" id="IPR018223">
    <property type="entry name" value="Arginosuc_synth_CS"/>
</dbReference>
<dbReference type="InterPro" id="IPR023434">
    <property type="entry name" value="Arginosuc_synth_type_1_subfam"/>
</dbReference>
<dbReference type="InterPro" id="IPR024074">
    <property type="entry name" value="AS_cat/multimer_dom_body"/>
</dbReference>
<dbReference type="InterPro" id="IPR014729">
    <property type="entry name" value="Rossmann-like_a/b/a_fold"/>
</dbReference>
<dbReference type="NCBIfam" id="TIGR00032">
    <property type="entry name" value="argG"/>
    <property type="match status" value="1"/>
</dbReference>
<dbReference type="NCBIfam" id="NF001770">
    <property type="entry name" value="PRK00509.1"/>
    <property type="match status" value="1"/>
</dbReference>
<dbReference type="PANTHER" id="PTHR11587">
    <property type="entry name" value="ARGININOSUCCINATE SYNTHASE"/>
    <property type="match status" value="1"/>
</dbReference>
<dbReference type="PANTHER" id="PTHR11587:SF2">
    <property type="entry name" value="ARGININOSUCCINATE SYNTHASE"/>
    <property type="match status" value="1"/>
</dbReference>
<dbReference type="Pfam" id="PF20979">
    <property type="entry name" value="Arginosuc_syn_C"/>
    <property type="match status" value="1"/>
</dbReference>
<dbReference type="Pfam" id="PF00764">
    <property type="entry name" value="Arginosuc_synth"/>
    <property type="match status" value="1"/>
</dbReference>
<dbReference type="SUPFAM" id="SSF52402">
    <property type="entry name" value="Adenine nucleotide alpha hydrolases-like"/>
    <property type="match status" value="1"/>
</dbReference>
<dbReference type="SUPFAM" id="SSF69864">
    <property type="entry name" value="Argininosuccinate synthetase, C-terminal domain"/>
    <property type="match status" value="1"/>
</dbReference>
<dbReference type="PROSITE" id="PS00564">
    <property type="entry name" value="ARGININOSUCCIN_SYN_1"/>
    <property type="match status" value="1"/>
</dbReference>
<dbReference type="PROSITE" id="PS00565">
    <property type="entry name" value="ARGININOSUCCIN_SYN_2"/>
    <property type="match status" value="1"/>
</dbReference>
<organism>
    <name type="scientific">Pseudothermotoga lettingae (strain ATCC BAA-301 / DSM 14385 / NBRC 107922 / TMO)</name>
    <name type="common">Thermotoga lettingae</name>
    <dbReference type="NCBI Taxonomy" id="416591"/>
    <lineage>
        <taxon>Bacteria</taxon>
        <taxon>Thermotogati</taxon>
        <taxon>Thermotogota</taxon>
        <taxon>Thermotogae</taxon>
        <taxon>Thermotogales</taxon>
        <taxon>Thermotogaceae</taxon>
        <taxon>Pseudothermotoga</taxon>
    </lineage>
</organism>
<gene>
    <name evidence="1" type="primary">argG</name>
    <name type="ordered locus">Tlet_0363</name>
</gene>
<proteinExistence type="inferred from homology"/>
<protein>
    <recommendedName>
        <fullName evidence="1">Argininosuccinate synthase</fullName>
        <ecNumber evidence="1">6.3.4.5</ecNumber>
    </recommendedName>
    <alternativeName>
        <fullName evidence="1">Citrulline--aspartate ligase</fullName>
    </alternativeName>
</protein>
<accession>A8F446</accession>
<reference key="1">
    <citation type="submission" date="2007-08" db="EMBL/GenBank/DDBJ databases">
        <title>Complete sequence of Thermotoga lettingae TMO.</title>
        <authorList>
            <consortium name="US DOE Joint Genome Institute"/>
            <person name="Copeland A."/>
            <person name="Lucas S."/>
            <person name="Lapidus A."/>
            <person name="Barry K."/>
            <person name="Glavina del Rio T."/>
            <person name="Dalin E."/>
            <person name="Tice H."/>
            <person name="Pitluck S."/>
            <person name="Foster B."/>
            <person name="Bruce D."/>
            <person name="Schmutz J."/>
            <person name="Larimer F."/>
            <person name="Land M."/>
            <person name="Hauser L."/>
            <person name="Kyrpides N."/>
            <person name="Mikhailova N."/>
            <person name="Nelson K."/>
            <person name="Gogarten J.P."/>
            <person name="Noll K."/>
            <person name="Richardson P."/>
        </authorList>
    </citation>
    <scope>NUCLEOTIDE SEQUENCE [LARGE SCALE GENOMIC DNA]</scope>
    <source>
        <strain>ATCC BAA-301 / DSM 14385 / NBRC 107922 / TMO</strain>
    </source>
</reference>
<sequence length="425" mass="47789">MKKVILAYSGGLDTSVILKWLSEKGFEVIAFVANLGQKEDFKAIECKALSTGASKVYVEDLRREFVTEFVFPALMGNALYEGRYLLGTALSRPLIAKKQVEIAEKENAAFVAHGATGKGNDQVRFELTYAALNPFLKVLSPWKDIEFLKLFKGRTDLLAYAKQKCILTRATIEKPYSEDENLMHISHEGGKLEDPLYIAGEDVFSWTNSPKNAPDEEVFLELHFRSGLPVKVVNLNDGSTKEDPLELFEYLNRIGSKYGVGRVDMVENRFIGIKSRGIYETPGATILWIAHRDLEGIAMDKEVMHLRDMLSVKFSELIYNGFWFSPEMDFLLSAFRKSQEGIEGKVNLIIYKGNVVPVSRFSPTSLYDQSLSSMDVDGGFDATDSKGFINIHALRLRAHNLVLRSRDPFGWRRGIIDAEIMGKGV</sequence>